<evidence type="ECO:0000255" key="1">
    <source>
        <dbReference type="HAMAP-Rule" id="MF_01454"/>
    </source>
</evidence>
<evidence type="ECO:0000255" key="2">
    <source>
        <dbReference type="PROSITE-ProRule" id="PRU01229"/>
    </source>
</evidence>
<evidence type="ECO:0000255" key="3">
    <source>
        <dbReference type="PROSITE-ProRule" id="PRU01231"/>
    </source>
</evidence>
<evidence type="ECO:0000256" key="4">
    <source>
        <dbReference type="SAM" id="MobiDB-lite"/>
    </source>
</evidence>
<organism>
    <name type="scientific">Staphylococcus aureus (strain bovine RF122 / ET3-1)</name>
    <dbReference type="NCBI Taxonomy" id="273036"/>
    <lineage>
        <taxon>Bacteria</taxon>
        <taxon>Bacillati</taxon>
        <taxon>Bacillota</taxon>
        <taxon>Bacilli</taxon>
        <taxon>Bacillales</taxon>
        <taxon>Staphylococcaceae</taxon>
        <taxon>Staphylococcus</taxon>
    </lineage>
</organism>
<comment type="function">
    <text evidence="1">An essential GTPase which binds GTP, GDP and possibly (p)ppGpp with moderate affinity, with high nucleotide exchange rates and a fairly low GTP hydrolysis rate. Plays a role in control of the cell cycle, stress response, ribosome biogenesis and in those bacteria that undergo differentiation, in morphogenesis control.</text>
</comment>
<comment type="cofactor">
    <cofactor evidence="1">
        <name>Mg(2+)</name>
        <dbReference type="ChEBI" id="CHEBI:18420"/>
    </cofactor>
</comment>
<comment type="subunit">
    <text evidence="1">Monomer.</text>
</comment>
<comment type="subcellular location">
    <subcellularLocation>
        <location evidence="1">Cytoplasm</location>
    </subcellularLocation>
</comment>
<comment type="similarity">
    <text evidence="1">Belongs to the TRAFAC class OBG-HflX-like GTPase superfamily. OBG GTPase family.</text>
</comment>
<proteinExistence type="inferred from homology"/>
<keyword id="KW-0963">Cytoplasm</keyword>
<keyword id="KW-0342">GTP-binding</keyword>
<keyword id="KW-0378">Hydrolase</keyword>
<keyword id="KW-0460">Magnesium</keyword>
<keyword id="KW-0479">Metal-binding</keyword>
<keyword id="KW-0547">Nucleotide-binding</keyword>
<gene>
    <name evidence="1" type="primary">obg</name>
    <name type="ordered locus">SAB1513c</name>
</gene>
<feature type="chain" id="PRO_0000386268" description="GTPase Obg">
    <location>
        <begin position="1"/>
        <end position="430"/>
    </location>
</feature>
<feature type="domain" description="Obg" evidence="3">
    <location>
        <begin position="1"/>
        <end position="158"/>
    </location>
</feature>
<feature type="domain" description="OBG-type G" evidence="1">
    <location>
        <begin position="159"/>
        <end position="329"/>
    </location>
</feature>
<feature type="domain" description="OCT" evidence="2">
    <location>
        <begin position="352"/>
        <end position="430"/>
    </location>
</feature>
<feature type="region of interest" description="Disordered" evidence="4">
    <location>
        <begin position="118"/>
        <end position="145"/>
    </location>
</feature>
<feature type="binding site" evidence="1">
    <location>
        <begin position="165"/>
        <end position="172"/>
    </location>
    <ligand>
        <name>GTP</name>
        <dbReference type="ChEBI" id="CHEBI:37565"/>
    </ligand>
</feature>
<feature type="binding site" evidence="1">
    <location>
        <position position="172"/>
    </location>
    <ligand>
        <name>Mg(2+)</name>
        <dbReference type="ChEBI" id="CHEBI:18420"/>
    </ligand>
</feature>
<feature type="binding site" evidence="1">
    <location>
        <begin position="190"/>
        <end position="194"/>
    </location>
    <ligand>
        <name>GTP</name>
        <dbReference type="ChEBI" id="CHEBI:37565"/>
    </ligand>
</feature>
<feature type="binding site" evidence="1">
    <location>
        <position position="192"/>
    </location>
    <ligand>
        <name>Mg(2+)</name>
        <dbReference type="ChEBI" id="CHEBI:18420"/>
    </ligand>
</feature>
<feature type="binding site" evidence="1">
    <location>
        <begin position="212"/>
        <end position="215"/>
    </location>
    <ligand>
        <name>GTP</name>
        <dbReference type="ChEBI" id="CHEBI:37565"/>
    </ligand>
</feature>
<feature type="binding site" evidence="1">
    <location>
        <begin position="282"/>
        <end position="285"/>
    </location>
    <ligand>
        <name>GTP</name>
        <dbReference type="ChEBI" id="CHEBI:37565"/>
    </ligand>
</feature>
<feature type="binding site" evidence="1">
    <location>
        <begin position="310"/>
        <end position="312"/>
    </location>
    <ligand>
        <name>GTP</name>
        <dbReference type="ChEBI" id="CHEBI:37565"/>
    </ligand>
</feature>
<sequence length="430" mass="47204">MFVDQVKISLKAGDGGNGITAYRREKYVPFGGPAGGDGGKGASVVFEVDEGSRTLLDFRYQRHFKASKGENGQSSNMHGKNAEDLVLKVPPGTIIKNVETDEVLADLVEDGQRAVVAKGGRGGRGNSRFATPRNPAPDFSEKGEPGEELDVSLELKLLADVGLVGFPSVGKSTLLSIVSKAKPKIGAYHFTTIKPNLGVVSAPDQRSFVMADLPGLIEGASDGVGLGHQFLRHVERTKVIVHMIDMSGSEGREPIEDYKVINQELAAYEQRLEDRPQIVVANKMDLPESQDNLILFKEEIGEDVPVIPVSTITRDNIDQLLYAIADKLEEYKDVDFTVEEEESVGINRVLYKHTPSQDKFTILRDDDGAYVVSGNAIERMFKMTDFNSDPAVRRFARQMRSMGIDDALRERGCKNGDIVRILGGEFEFVE</sequence>
<protein>
    <recommendedName>
        <fullName evidence="1">GTPase Obg</fullName>
        <ecNumber evidence="1">3.6.5.-</ecNumber>
    </recommendedName>
    <alternativeName>
        <fullName evidence="1">GTP-binding protein Obg</fullName>
    </alternativeName>
</protein>
<dbReference type="EC" id="3.6.5.-" evidence="1"/>
<dbReference type="EMBL" id="AJ938182">
    <property type="protein sequence ID" value="CAI81202.1"/>
    <property type="molecule type" value="Genomic_DNA"/>
</dbReference>
<dbReference type="RefSeq" id="WP_000496109.1">
    <property type="nucleotide sequence ID" value="NC_007622.1"/>
</dbReference>
<dbReference type="SMR" id="Q2YT86"/>
<dbReference type="KEGG" id="sab:SAB1513c"/>
<dbReference type="HOGENOM" id="CLU_011747_2_1_9"/>
<dbReference type="GO" id="GO:0005737">
    <property type="term" value="C:cytoplasm"/>
    <property type="evidence" value="ECO:0007669"/>
    <property type="project" value="UniProtKB-SubCell"/>
</dbReference>
<dbReference type="GO" id="GO:0005525">
    <property type="term" value="F:GTP binding"/>
    <property type="evidence" value="ECO:0007669"/>
    <property type="project" value="UniProtKB-UniRule"/>
</dbReference>
<dbReference type="GO" id="GO:0003924">
    <property type="term" value="F:GTPase activity"/>
    <property type="evidence" value="ECO:0007669"/>
    <property type="project" value="UniProtKB-UniRule"/>
</dbReference>
<dbReference type="GO" id="GO:0000287">
    <property type="term" value="F:magnesium ion binding"/>
    <property type="evidence" value="ECO:0007669"/>
    <property type="project" value="InterPro"/>
</dbReference>
<dbReference type="GO" id="GO:0042254">
    <property type="term" value="P:ribosome biogenesis"/>
    <property type="evidence" value="ECO:0007669"/>
    <property type="project" value="UniProtKB-UniRule"/>
</dbReference>
<dbReference type="CDD" id="cd01898">
    <property type="entry name" value="Obg"/>
    <property type="match status" value="1"/>
</dbReference>
<dbReference type="FunFam" id="2.70.210.12:FF:000001">
    <property type="entry name" value="GTPase Obg"/>
    <property type="match status" value="1"/>
</dbReference>
<dbReference type="FunFam" id="3.40.50.300:FF:000515">
    <property type="entry name" value="GTPase Obg"/>
    <property type="match status" value="1"/>
</dbReference>
<dbReference type="Gene3D" id="3.30.300.350">
    <property type="entry name" value="GTP-binding protein OBG, C-terminal domain"/>
    <property type="match status" value="1"/>
</dbReference>
<dbReference type="Gene3D" id="2.70.210.12">
    <property type="entry name" value="GTP1/OBG domain"/>
    <property type="match status" value="1"/>
</dbReference>
<dbReference type="Gene3D" id="3.40.50.300">
    <property type="entry name" value="P-loop containing nucleotide triphosphate hydrolases"/>
    <property type="match status" value="1"/>
</dbReference>
<dbReference type="HAMAP" id="MF_01454">
    <property type="entry name" value="GTPase_Obg"/>
    <property type="match status" value="1"/>
</dbReference>
<dbReference type="InterPro" id="IPR031167">
    <property type="entry name" value="G_OBG"/>
</dbReference>
<dbReference type="InterPro" id="IPR006073">
    <property type="entry name" value="GTP-bd"/>
</dbReference>
<dbReference type="InterPro" id="IPR014100">
    <property type="entry name" value="GTP-bd_Obg/CgtA"/>
</dbReference>
<dbReference type="InterPro" id="IPR036346">
    <property type="entry name" value="GTP-bd_prot_GTP1/OBG_C_sf"/>
</dbReference>
<dbReference type="InterPro" id="IPR006074">
    <property type="entry name" value="GTP1-OBG_CS"/>
</dbReference>
<dbReference type="InterPro" id="IPR006169">
    <property type="entry name" value="GTP1_OBG_dom"/>
</dbReference>
<dbReference type="InterPro" id="IPR036726">
    <property type="entry name" value="GTP1_OBG_dom_sf"/>
</dbReference>
<dbReference type="InterPro" id="IPR045086">
    <property type="entry name" value="OBG_GTPase"/>
</dbReference>
<dbReference type="InterPro" id="IPR015349">
    <property type="entry name" value="OCT_dom"/>
</dbReference>
<dbReference type="InterPro" id="IPR027417">
    <property type="entry name" value="P-loop_NTPase"/>
</dbReference>
<dbReference type="NCBIfam" id="TIGR02729">
    <property type="entry name" value="Obg_CgtA"/>
    <property type="match status" value="1"/>
</dbReference>
<dbReference type="NCBIfam" id="TIGR03595">
    <property type="entry name" value="Obg_CgtA_exten"/>
    <property type="match status" value="1"/>
</dbReference>
<dbReference type="NCBIfam" id="NF008954">
    <property type="entry name" value="PRK12296.1"/>
    <property type="match status" value="1"/>
</dbReference>
<dbReference type="NCBIfam" id="NF008955">
    <property type="entry name" value="PRK12297.1"/>
    <property type="match status" value="1"/>
</dbReference>
<dbReference type="NCBIfam" id="NF008956">
    <property type="entry name" value="PRK12299.1"/>
    <property type="match status" value="1"/>
</dbReference>
<dbReference type="PANTHER" id="PTHR11702">
    <property type="entry name" value="DEVELOPMENTALLY REGULATED GTP-BINDING PROTEIN-RELATED"/>
    <property type="match status" value="1"/>
</dbReference>
<dbReference type="PANTHER" id="PTHR11702:SF31">
    <property type="entry name" value="MITOCHONDRIAL RIBOSOME-ASSOCIATED GTPASE 2"/>
    <property type="match status" value="1"/>
</dbReference>
<dbReference type="Pfam" id="PF09269">
    <property type="entry name" value="DUF1967"/>
    <property type="match status" value="1"/>
</dbReference>
<dbReference type="Pfam" id="PF01018">
    <property type="entry name" value="GTP1_OBG"/>
    <property type="match status" value="1"/>
</dbReference>
<dbReference type="Pfam" id="PF01926">
    <property type="entry name" value="MMR_HSR1"/>
    <property type="match status" value="1"/>
</dbReference>
<dbReference type="PRINTS" id="PR00326">
    <property type="entry name" value="GTP1OBG"/>
</dbReference>
<dbReference type="SUPFAM" id="SSF102741">
    <property type="entry name" value="Obg GTP-binding protein C-terminal domain"/>
    <property type="match status" value="1"/>
</dbReference>
<dbReference type="SUPFAM" id="SSF82051">
    <property type="entry name" value="Obg GTP-binding protein N-terminal domain"/>
    <property type="match status" value="1"/>
</dbReference>
<dbReference type="SUPFAM" id="SSF52540">
    <property type="entry name" value="P-loop containing nucleoside triphosphate hydrolases"/>
    <property type="match status" value="1"/>
</dbReference>
<dbReference type="PROSITE" id="PS51710">
    <property type="entry name" value="G_OBG"/>
    <property type="match status" value="1"/>
</dbReference>
<dbReference type="PROSITE" id="PS00905">
    <property type="entry name" value="GTP1_OBG"/>
    <property type="match status" value="1"/>
</dbReference>
<dbReference type="PROSITE" id="PS51883">
    <property type="entry name" value="OBG"/>
    <property type="match status" value="1"/>
</dbReference>
<dbReference type="PROSITE" id="PS51881">
    <property type="entry name" value="OCT"/>
    <property type="match status" value="1"/>
</dbReference>
<name>OBG_STAAB</name>
<accession>Q2YT86</accession>
<reference key="1">
    <citation type="journal article" date="2007" name="PLoS ONE">
        <title>Molecular correlates of host specialization in Staphylococcus aureus.</title>
        <authorList>
            <person name="Herron-Olson L."/>
            <person name="Fitzgerald J.R."/>
            <person name="Musser J.M."/>
            <person name="Kapur V."/>
        </authorList>
    </citation>
    <scope>NUCLEOTIDE SEQUENCE [LARGE SCALE GENOMIC DNA]</scope>
    <source>
        <strain>bovine RF122 / ET3-1</strain>
    </source>
</reference>